<sequence length="749" mass="84362">MTTTIIGFPRIGEHRELKFITEKYFRNEIPQEELLEAAKDLRAKHWNIVKEAGITEIPSNDFSHYDNVLDAAVLFNIIPKAVQDLELTDLEKYFALARGYQGEKGDVRARPMKKWFNTNYHYIVPAIEKDTEIKLAGHKIFDEFQEAKNLGITTRPVLIGPFTLLQLTDFEEGLTATNFADSLVAAYGQVFEKLAELGAEKIQLDEPSLVKDLTAEEKALFLRIYQTLLADKKGLQVLIQTYFGDVRDIYTELTSLPVDAIGLDFVEGKETAALVATGFPADKTLYAGIVNGKNIWRNNYEKSLAVLDAIPAENVVITTSCSLLHVPFTTANEEFEPAILNHFAFAVEKLSELRDLDAIRNGQGEVALTANKELFALERVGRDAALADRLAGLTDTDYTRLPVFAERESIQREKLNLPLLPTTTIGSFPQTKEVRSTRLAFRKGNISEEEYDAFVKTQTDEWIAWQEEVDFDVLVHGEFERNDMVEYFGENLSGYLFSKNGWVQSYGMRGVKPPIIWGDVTRLNPITVKWSSYAQSRTNKPVKGMLTGPVTILNWSFPREDISIKESTLQIALAIKEEVLDLEAAGIKIIQIDEAALREKLPLRRSDWYSEYLDWAIPAFRLVHSTVAPDTQIHTHMCYSEFTDIIPAIDNMDADVISFEASRSNLVILDELKAKNFQTQVGPGVYDIHSPRVPAVDEIAHTIQAILAKVPKEKVWINPDCGLKTRGESETKASLIHLTQAAKAARKEL</sequence>
<comment type="function">
    <text evidence="1">Catalyzes the transfer of a methyl group from 5-methyltetrahydrofolate to homocysteine resulting in methionine formation.</text>
</comment>
<comment type="catalytic activity">
    <reaction evidence="1">
        <text>5-methyltetrahydropteroyltri-L-glutamate + L-homocysteine = tetrahydropteroyltri-L-glutamate + L-methionine</text>
        <dbReference type="Rhea" id="RHEA:21196"/>
        <dbReference type="ChEBI" id="CHEBI:57844"/>
        <dbReference type="ChEBI" id="CHEBI:58140"/>
        <dbReference type="ChEBI" id="CHEBI:58199"/>
        <dbReference type="ChEBI" id="CHEBI:58207"/>
        <dbReference type="EC" id="2.1.1.14"/>
    </reaction>
</comment>
<comment type="cofactor">
    <cofactor evidence="1">
        <name>Zn(2+)</name>
        <dbReference type="ChEBI" id="CHEBI:29105"/>
    </cofactor>
    <text evidence="1">Binds 1 zinc ion per subunit.</text>
</comment>
<comment type="pathway">
    <text evidence="1">Amino-acid biosynthesis; L-methionine biosynthesis via de novo pathway; L-methionine from L-homocysteine (MetE route): step 1/1.</text>
</comment>
<comment type="similarity">
    <text evidence="1">Belongs to the vitamin-B12 independent methionine synthase family.</text>
</comment>
<proteinExistence type="inferred from homology"/>
<dbReference type="EC" id="2.1.1.14" evidence="1"/>
<dbReference type="EMBL" id="CP000407">
    <property type="protein sequence ID" value="ABP90740.1"/>
    <property type="molecule type" value="Genomic_DNA"/>
</dbReference>
<dbReference type="SMR" id="A4VXA1"/>
<dbReference type="STRING" id="391295.SSU05_1774"/>
<dbReference type="KEGG" id="ssu:SSU05_1774"/>
<dbReference type="eggNOG" id="COG0620">
    <property type="taxonomic scope" value="Bacteria"/>
</dbReference>
<dbReference type="HOGENOM" id="CLU_013175_0_0_9"/>
<dbReference type="UniPathway" id="UPA00051">
    <property type="reaction ID" value="UER00082"/>
</dbReference>
<dbReference type="GO" id="GO:0003871">
    <property type="term" value="F:5-methyltetrahydropteroyltriglutamate-homocysteine S-methyltransferase activity"/>
    <property type="evidence" value="ECO:0007669"/>
    <property type="project" value="UniProtKB-UniRule"/>
</dbReference>
<dbReference type="GO" id="GO:0008270">
    <property type="term" value="F:zinc ion binding"/>
    <property type="evidence" value="ECO:0007669"/>
    <property type="project" value="InterPro"/>
</dbReference>
<dbReference type="GO" id="GO:0009086">
    <property type="term" value="P:methionine biosynthetic process"/>
    <property type="evidence" value="ECO:0007669"/>
    <property type="project" value="UniProtKB-UniRule"/>
</dbReference>
<dbReference type="GO" id="GO:0032259">
    <property type="term" value="P:methylation"/>
    <property type="evidence" value="ECO:0007669"/>
    <property type="project" value="UniProtKB-KW"/>
</dbReference>
<dbReference type="CDD" id="cd03311">
    <property type="entry name" value="CIMS_C_terminal_like"/>
    <property type="match status" value="1"/>
</dbReference>
<dbReference type="CDD" id="cd03312">
    <property type="entry name" value="CIMS_N_terminal_like"/>
    <property type="match status" value="1"/>
</dbReference>
<dbReference type="Gene3D" id="3.20.20.210">
    <property type="match status" value="2"/>
</dbReference>
<dbReference type="HAMAP" id="MF_00172">
    <property type="entry name" value="Meth_synth"/>
    <property type="match status" value="1"/>
</dbReference>
<dbReference type="InterPro" id="IPR013215">
    <property type="entry name" value="Cbl-indep_Met_Synth_N"/>
</dbReference>
<dbReference type="InterPro" id="IPR006276">
    <property type="entry name" value="Cobalamin-indep_Met_synthase"/>
</dbReference>
<dbReference type="InterPro" id="IPR002629">
    <property type="entry name" value="Met_Synth_C/arc"/>
</dbReference>
<dbReference type="InterPro" id="IPR038071">
    <property type="entry name" value="UROD/MetE-like_sf"/>
</dbReference>
<dbReference type="NCBIfam" id="TIGR01371">
    <property type="entry name" value="met_syn_B12ind"/>
    <property type="match status" value="1"/>
</dbReference>
<dbReference type="NCBIfam" id="NF003556">
    <property type="entry name" value="PRK05222.1"/>
    <property type="match status" value="1"/>
</dbReference>
<dbReference type="PANTHER" id="PTHR30519">
    <property type="entry name" value="5-METHYLTETRAHYDROPTEROYLTRIGLUTAMATE--HOMOCYSTEINE METHYLTRANSFERASE"/>
    <property type="match status" value="1"/>
</dbReference>
<dbReference type="Pfam" id="PF08267">
    <property type="entry name" value="Meth_synt_1"/>
    <property type="match status" value="1"/>
</dbReference>
<dbReference type="Pfam" id="PF01717">
    <property type="entry name" value="Meth_synt_2"/>
    <property type="match status" value="1"/>
</dbReference>
<dbReference type="PIRSF" id="PIRSF000382">
    <property type="entry name" value="MeTrfase_B12_ind"/>
    <property type="match status" value="1"/>
</dbReference>
<dbReference type="SUPFAM" id="SSF51726">
    <property type="entry name" value="UROD/MetE-like"/>
    <property type="match status" value="2"/>
</dbReference>
<reference key="1">
    <citation type="journal article" date="2007" name="PLoS ONE">
        <title>A glimpse of streptococcal toxic shock syndrome from comparative genomics of S. suis 2 Chinese isolates.</title>
        <authorList>
            <person name="Chen C."/>
            <person name="Tang J."/>
            <person name="Dong W."/>
            <person name="Wang C."/>
            <person name="Feng Y."/>
            <person name="Wang J."/>
            <person name="Zheng F."/>
            <person name="Pan X."/>
            <person name="Liu D."/>
            <person name="Li M."/>
            <person name="Song Y."/>
            <person name="Zhu X."/>
            <person name="Sun H."/>
            <person name="Feng T."/>
            <person name="Guo Z."/>
            <person name="Ju A."/>
            <person name="Ge J."/>
            <person name="Dong Y."/>
            <person name="Sun W."/>
            <person name="Jiang Y."/>
            <person name="Wang J."/>
            <person name="Yan J."/>
            <person name="Yang H."/>
            <person name="Wang X."/>
            <person name="Gao G.F."/>
            <person name="Yang R."/>
            <person name="Wang J."/>
            <person name="Yu J."/>
        </authorList>
    </citation>
    <scope>NUCLEOTIDE SEQUENCE [LARGE SCALE GENOMIC DNA]</scope>
    <source>
        <strain>05ZYH33</strain>
    </source>
</reference>
<gene>
    <name evidence="1" type="primary">metE</name>
    <name type="ordered locus">SSU05_1774</name>
</gene>
<name>METE_STRSY</name>
<feature type="chain" id="PRO_1000017285" description="5-methyltetrahydropteroyltriglutamate--homocysteine methyltransferase">
    <location>
        <begin position="1"/>
        <end position="749"/>
    </location>
</feature>
<feature type="active site" description="Proton donor" evidence="1">
    <location>
        <position position="689"/>
    </location>
</feature>
<feature type="binding site" evidence="1">
    <location>
        <begin position="15"/>
        <end position="18"/>
    </location>
    <ligand>
        <name>5-methyltetrahydropteroyltri-L-glutamate</name>
        <dbReference type="ChEBI" id="CHEBI:58207"/>
    </ligand>
</feature>
<feature type="binding site" evidence="1">
    <location>
        <position position="114"/>
    </location>
    <ligand>
        <name>5-methyltetrahydropteroyltri-L-glutamate</name>
        <dbReference type="ChEBI" id="CHEBI:58207"/>
    </ligand>
</feature>
<feature type="binding site" evidence="1">
    <location>
        <begin position="425"/>
        <end position="427"/>
    </location>
    <ligand>
        <name>L-homocysteine</name>
        <dbReference type="ChEBI" id="CHEBI:58199"/>
    </ligand>
</feature>
<feature type="binding site" evidence="1">
    <location>
        <begin position="425"/>
        <end position="427"/>
    </location>
    <ligand>
        <name>L-methionine</name>
        <dbReference type="ChEBI" id="CHEBI:57844"/>
    </ligand>
</feature>
<feature type="binding site" evidence="1">
    <location>
        <position position="478"/>
    </location>
    <ligand>
        <name>L-homocysteine</name>
        <dbReference type="ChEBI" id="CHEBI:58199"/>
    </ligand>
</feature>
<feature type="binding site" evidence="1">
    <location>
        <position position="478"/>
    </location>
    <ligand>
        <name>L-methionine</name>
        <dbReference type="ChEBI" id="CHEBI:57844"/>
    </ligand>
</feature>
<feature type="binding site" evidence="1">
    <location>
        <position position="555"/>
    </location>
    <ligand>
        <name>5-methyltetrahydropteroyltri-L-glutamate</name>
        <dbReference type="ChEBI" id="CHEBI:58207"/>
    </ligand>
</feature>
<feature type="binding site" evidence="1">
    <location>
        <position position="593"/>
    </location>
    <ligand>
        <name>L-homocysteine</name>
        <dbReference type="ChEBI" id="CHEBI:58199"/>
    </ligand>
</feature>
<feature type="binding site" evidence="1">
    <location>
        <position position="593"/>
    </location>
    <ligand>
        <name>L-methionine</name>
        <dbReference type="ChEBI" id="CHEBI:57844"/>
    </ligand>
</feature>
<feature type="binding site" evidence="1">
    <location>
        <position position="599"/>
    </location>
    <ligand>
        <name>5-methyltetrahydropteroyltri-L-glutamate</name>
        <dbReference type="ChEBI" id="CHEBI:58207"/>
    </ligand>
</feature>
<feature type="binding site" evidence="1">
    <location>
        <position position="636"/>
    </location>
    <ligand>
        <name>Zn(2+)</name>
        <dbReference type="ChEBI" id="CHEBI:29105"/>
        <note>catalytic</note>
    </ligand>
</feature>
<feature type="binding site" evidence="1">
    <location>
        <position position="638"/>
    </location>
    <ligand>
        <name>Zn(2+)</name>
        <dbReference type="ChEBI" id="CHEBI:29105"/>
        <note>catalytic</note>
    </ligand>
</feature>
<feature type="binding site" evidence="1">
    <location>
        <position position="660"/>
    </location>
    <ligand>
        <name>Zn(2+)</name>
        <dbReference type="ChEBI" id="CHEBI:29105"/>
        <note>catalytic</note>
    </ligand>
</feature>
<feature type="binding site" evidence="1">
    <location>
        <position position="721"/>
    </location>
    <ligand>
        <name>Zn(2+)</name>
        <dbReference type="ChEBI" id="CHEBI:29105"/>
        <note>catalytic</note>
    </ligand>
</feature>
<protein>
    <recommendedName>
        <fullName evidence="1">5-methyltetrahydropteroyltriglutamate--homocysteine methyltransferase</fullName>
        <ecNumber evidence="1">2.1.1.14</ecNumber>
    </recommendedName>
    <alternativeName>
        <fullName evidence="1">Cobalamin-independent methionine synthase</fullName>
    </alternativeName>
    <alternativeName>
        <fullName evidence="1">Methionine synthase, vitamin-B12 independent isozyme</fullName>
    </alternativeName>
</protein>
<keyword id="KW-0028">Amino-acid biosynthesis</keyword>
<keyword id="KW-0479">Metal-binding</keyword>
<keyword id="KW-0486">Methionine biosynthesis</keyword>
<keyword id="KW-0489">Methyltransferase</keyword>
<keyword id="KW-0677">Repeat</keyword>
<keyword id="KW-0808">Transferase</keyword>
<keyword id="KW-0862">Zinc</keyword>
<organism>
    <name type="scientific">Streptococcus suis (strain 05ZYH33)</name>
    <dbReference type="NCBI Taxonomy" id="391295"/>
    <lineage>
        <taxon>Bacteria</taxon>
        <taxon>Bacillati</taxon>
        <taxon>Bacillota</taxon>
        <taxon>Bacilli</taxon>
        <taxon>Lactobacillales</taxon>
        <taxon>Streptococcaceae</taxon>
        <taxon>Streptococcus</taxon>
    </lineage>
</organism>
<evidence type="ECO:0000255" key="1">
    <source>
        <dbReference type="HAMAP-Rule" id="MF_00172"/>
    </source>
</evidence>
<accession>A4VXA1</accession>